<dbReference type="EC" id="5.4.3.-"/>
<dbReference type="EMBL" id="AE000520">
    <property type="protein sequence ID" value="AAC65111.1"/>
    <property type="molecule type" value="Genomic_DNA"/>
</dbReference>
<dbReference type="PIR" id="H71363">
    <property type="entry name" value="H71363"/>
</dbReference>
<dbReference type="SMR" id="O83158"/>
<dbReference type="IntAct" id="O83158">
    <property type="interactions" value="10"/>
</dbReference>
<dbReference type="STRING" id="243276.TP_0121"/>
<dbReference type="EnsemblBacteria" id="AAC65111">
    <property type="protein sequence ID" value="AAC65111"/>
    <property type="gene ID" value="TP_0121"/>
</dbReference>
<dbReference type="KEGG" id="tpa:TP_0121"/>
<dbReference type="KEGG" id="tpw:TPANIC_0121"/>
<dbReference type="eggNOG" id="COG1509">
    <property type="taxonomic scope" value="Bacteria"/>
</dbReference>
<dbReference type="HOGENOM" id="CLU_032161_2_0_12"/>
<dbReference type="Proteomes" id="UP000000811">
    <property type="component" value="Chromosome"/>
</dbReference>
<dbReference type="GO" id="GO:0051539">
    <property type="term" value="F:4 iron, 4 sulfur cluster binding"/>
    <property type="evidence" value="ECO:0007669"/>
    <property type="project" value="UniProtKB-KW"/>
</dbReference>
<dbReference type="GO" id="GO:0016853">
    <property type="term" value="F:isomerase activity"/>
    <property type="evidence" value="ECO:0007669"/>
    <property type="project" value="UniProtKB-KW"/>
</dbReference>
<dbReference type="GO" id="GO:0046872">
    <property type="term" value="F:metal ion binding"/>
    <property type="evidence" value="ECO:0007669"/>
    <property type="project" value="UniProtKB-KW"/>
</dbReference>
<dbReference type="CDD" id="cd01335">
    <property type="entry name" value="Radical_SAM"/>
    <property type="match status" value="1"/>
</dbReference>
<dbReference type="Gene3D" id="3.20.20.70">
    <property type="entry name" value="Aldolase class I"/>
    <property type="match status" value="1"/>
</dbReference>
<dbReference type="InterPro" id="IPR013785">
    <property type="entry name" value="Aldolase_TIM"/>
</dbReference>
<dbReference type="InterPro" id="IPR003739">
    <property type="entry name" value="Lys_aminomutase/Glu_NH3_mut"/>
</dbReference>
<dbReference type="InterPro" id="IPR007197">
    <property type="entry name" value="rSAM"/>
</dbReference>
<dbReference type="NCBIfam" id="TIGR00238">
    <property type="entry name" value="KamA family radical SAM protein"/>
    <property type="match status" value="1"/>
</dbReference>
<dbReference type="PANTHER" id="PTHR30538:SF1">
    <property type="entry name" value="L-LYSINE 2,3-AMINOMUTASE"/>
    <property type="match status" value="1"/>
</dbReference>
<dbReference type="PANTHER" id="PTHR30538">
    <property type="entry name" value="LYSINE 2,3-AMINOMUTASE-RELATED"/>
    <property type="match status" value="1"/>
</dbReference>
<dbReference type="Pfam" id="PF13353">
    <property type="entry name" value="Fer4_12"/>
    <property type="match status" value="1"/>
</dbReference>
<dbReference type="Pfam" id="PF04055">
    <property type="entry name" value="Radical_SAM"/>
    <property type="match status" value="1"/>
</dbReference>
<dbReference type="PIRSF" id="PIRSF004911">
    <property type="entry name" value="DUF160"/>
    <property type="match status" value="1"/>
</dbReference>
<dbReference type="SFLD" id="SFLDG01070">
    <property type="entry name" value="PLP-dependent"/>
    <property type="match status" value="1"/>
</dbReference>
<dbReference type="SFLD" id="SFLDS00029">
    <property type="entry name" value="Radical_SAM"/>
    <property type="match status" value="1"/>
</dbReference>
<dbReference type="SUPFAM" id="SSF102114">
    <property type="entry name" value="Radical SAM enzymes"/>
    <property type="match status" value="1"/>
</dbReference>
<dbReference type="PROSITE" id="PS51918">
    <property type="entry name" value="RADICAL_SAM"/>
    <property type="match status" value="1"/>
</dbReference>
<accession>O83158</accession>
<protein>
    <recommendedName>
        <fullName>Putative L-lysine 2,3-aminomutase</fullName>
        <shortName>LAM</shortName>
        <ecNumber>5.4.3.-</ecNumber>
    </recommendedName>
</protein>
<sequence length="355" mass="39102">MSMAECTREQRKRRGAGRADEHWRTLSPASCAADALTEHISPAYAHLIAQAQGADAQALKRQVCFAPQERVVHACECADPLGEDRYCVTPFLVHQYANRVLMLATGRCFSHCRYCFRRGFIAQRAGWIPNEEREKIITYLRATPSVKEILVSGGDPLTGSFAQVTSLFRALRSVAPDLIIRLCTRAVTFAPQAFTPELIAFLQEMKPVWIIPHINHPAELGSTQRAVLEACVGAGLPVQSQSVLLRGVNDSVETLCTLFHALTCLGVKPGYLFQLDLAPGTGDFRVPLSDTLALWRTLKERLSGLSLPTLAVDLPGGGGKFPLVALALQQDVTWHQEREAFSARGIDGAWYTYPF</sequence>
<gene>
    <name type="ordered locus">TP_0121</name>
</gene>
<proteinExistence type="inferred from homology"/>
<organism>
    <name type="scientific">Treponema pallidum (strain Nichols)</name>
    <dbReference type="NCBI Taxonomy" id="243276"/>
    <lineage>
        <taxon>Bacteria</taxon>
        <taxon>Pseudomonadati</taxon>
        <taxon>Spirochaetota</taxon>
        <taxon>Spirochaetia</taxon>
        <taxon>Spirochaetales</taxon>
        <taxon>Treponemataceae</taxon>
        <taxon>Treponema</taxon>
    </lineage>
</organism>
<comment type="cofactor">
    <cofactor evidence="1">
        <name>[4Fe-4S] cluster</name>
        <dbReference type="ChEBI" id="CHEBI:49883"/>
    </cofactor>
    <text evidence="1">Binds 1 [4Fe-4S] cluster. The cluster is coordinated with 3 cysteines and an exchangeable S-adenosyl-L-methionine.</text>
</comment>
<comment type="cofactor">
    <cofactor evidence="1">
        <name>pyridoxal 5'-phosphate</name>
        <dbReference type="ChEBI" id="CHEBI:597326"/>
    </cofactor>
</comment>
<comment type="similarity">
    <text evidence="4">Belongs to the radical SAM superfamily. KamA family.</text>
</comment>
<reference key="1">
    <citation type="journal article" date="1998" name="Science">
        <title>Complete genome sequence of Treponema pallidum, the syphilis spirochete.</title>
        <authorList>
            <person name="Fraser C.M."/>
            <person name="Norris S.J."/>
            <person name="Weinstock G.M."/>
            <person name="White O."/>
            <person name="Sutton G.G."/>
            <person name="Dodson R.J."/>
            <person name="Gwinn M.L."/>
            <person name="Hickey E.K."/>
            <person name="Clayton R.A."/>
            <person name="Ketchum K.A."/>
            <person name="Sodergren E."/>
            <person name="Hardham J.M."/>
            <person name="McLeod M.P."/>
            <person name="Salzberg S.L."/>
            <person name="Peterson J.D."/>
            <person name="Khalak H.G."/>
            <person name="Richardson D.L."/>
            <person name="Howell J.K."/>
            <person name="Chidambaram M."/>
            <person name="Utterback T.R."/>
            <person name="McDonald L.A."/>
            <person name="Artiach P."/>
            <person name="Bowman C."/>
            <person name="Cotton M.D."/>
            <person name="Fujii C."/>
            <person name="Garland S.A."/>
            <person name="Hatch B."/>
            <person name="Horst K."/>
            <person name="Roberts K.M."/>
            <person name="Sandusky M."/>
            <person name="Weidman J.F."/>
            <person name="Smith H.O."/>
            <person name="Venter J.C."/>
        </authorList>
    </citation>
    <scope>NUCLEOTIDE SEQUENCE [LARGE SCALE GENOMIC DNA]</scope>
    <source>
        <strain>Nichols</strain>
    </source>
</reference>
<evidence type="ECO:0000250" key="1"/>
<evidence type="ECO:0000255" key="2"/>
<evidence type="ECO:0000255" key="3">
    <source>
        <dbReference type="PROSITE-ProRule" id="PRU01266"/>
    </source>
</evidence>
<evidence type="ECO:0000305" key="4"/>
<feature type="chain" id="PRO_0000172294" description="Putative L-lysine 2,3-aminomutase">
    <location>
        <begin position="1"/>
        <end position="355"/>
    </location>
</feature>
<feature type="domain" description="Radical SAM core" evidence="3">
    <location>
        <begin position="93"/>
        <end position="308"/>
    </location>
</feature>
<feature type="binding site" evidence="2">
    <location>
        <position position="108"/>
    </location>
    <ligand>
        <name>[4Fe-4S] cluster</name>
        <dbReference type="ChEBI" id="CHEBI:49883"/>
        <note>4Fe-4S-S-AdoMet</note>
    </ligand>
</feature>
<feature type="binding site" evidence="2">
    <location>
        <position position="112"/>
    </location>
    <ligand>
        <name>[4Fe-4S] cluster</name>
        <dbReference type="ChEBI" id="CHEBI:49883"/>
        <note>4Fe-4S-S-AdoMet</note>
    </ligand>
</feature>
<feature type="binding site" evidence="2">
    <location>
        <position position="115"/>
    </location>
    <ligand>
        <name>[4Fe-4S] cluster</name>
        <dbReference type="ChEBI" id="CHEBI:49883"/>
        <note>4Fe-4S-S-AdoMet</note>
    </ligand>
</feature>
<feature type="modified residue" description="N6-(pyridoxal phosphate)lysine" evidence="1">
    <location>
        <position position="320"/>
    </location>
</feature>
<name>Y121_TREPA</name>
<keyword id="KW-0004">4Fe-4S</keyword>
<keyword id="KW-0408">Iron</keyword>
<keyword id="KW-0411">Iron-sulfur</keyword>
<keyword id="KW-0413">Isomerase</keyword>
<keyword id="KW-0479">Metal-binding</keyword>
<keyword id="KW-0663">Pyridoxal phosphate</keyword>
<keyword id="KW-1185">Reference proteome</keyword>
<keyword id="KW-0949">S-adenosyl-L-methionine</keyword>